<name>CYC_CANGA</name>
<dbReference type="EMBL" id="X58249">
    <property type="protein sequence ID" value="CAA41203.1"/>
    <property type="molecule type" value="Genomic_DNA"/>
</dbReference>
<dbReference type="EMBL" id="CR380955">
    <property type="protein sequence ID" value="CAG60253.1"/>
    <property type="molecule type" value="Genomic_DNA"/>
</dbReference>
<dbReference type="PIR" id="S16761">
    <property type="entry name" value="S16761"/>
</dbReference>
<dbReference type="RefSeq" id="XP_447316.1">
    <property type="nucleotide sequence ID" value="XM_447316.1"/>
</dbReference>
<dbReference type="SMR" id="P25400"/>
<dbReference type="FunCoup" id="P25400">
    <property type="interactions" value="636"/>
</dbReference>
<dbReference type="STRING" id="284593.P25400"/>
<dbReference type="EnsemblFungi" id="CAGL0I01408g-T">
    <property type="protein sequence ID" value="CAGL0I01408g-T-p1"/>
    <property type="gene ID" value="CAGL0I01408g"/>
</dbReference>
<dbReference type="GeneID" id="2888955"/>
<dbReference type="KEGG" id="cgr:2888955"/>
<dbReference type="CGD" id="CAL0132740">
    <property type="gene designation" value="CYC1"/>
</dbReference>
<dbReference type="VEuPathDB" id="FungiDB:B1J91_I01408g"/>
<dbReference type="VEuPathDB" id="FungiDB:CAGL0I01408g"/>
<dbReference type="eggNOG" id="KOG3453">
    <property type="taxonomic scope" value="Eukaryota"/>
</dbReference>
<dbReference type="HOGENOM" id="CLU_060944_3_0_1"/>
<dbReference type="InParanoid" id="P25400"/>
<dbReference type="OMA" id="KARCAQC"/>
<dbReference type="Proteomes" id="UP000002428">
    <property type="component" value="Chromosome I"/>
</dbReference>
<dbReference type="GO" id="GO:0005576">
    <property type="term" value="C:extracellular region"/>
    <property type="evidence" value="ECO:0000314"/>
    <property type="project" value="CGD"/>
</dbReference>
<dbReference type="GO" id="GO:0005758">
    <property type="term" value="C:mitochondrial intermembrane space"/>
    <property type="evidence" value="ECO:0007669"/>
    <property type="project" value="UniProtKB-SubCell"/>
</dbReference>
<dbReference type="GO" id="GO:0009055">
    <property type="term" value="F:electron transfer activity"/>
    <property type="evidence" value="ECO:0007669"/>
    <property type="project" value="InterPro"/>
</dbReference>
<dbReference type="GO" id="GO:0020037">
    <property type="term" value="F:heme binding"/>
    <property type="evidence" value="ECO:0007669"/>
    <property type="project" value="InterPro"/>
</dbReference>
<dbReference type="GO" id="GO:0046872">
    <property type="term" value="F:metal ion binding"/>
    <property type="evidence" value="ECO:0007669"/>
    <property type="project" value="UniProtKB-KW"/>
</dbReference>
<dbReference type="FunFam" id="1.10.760.10:FF:000001">
    <property type="entry name" value="Cytochrome c iso-1"/>
    <property type="match status" value="1"/>
</dbReference>
<dbReference type="Gene3D" id="1.10.760.10">
    <property type="entry name" value="Cytochrome c-like domain"/>
    <property type="match status" value="1"/>
</dbReference>
<dbReference type="InterPro" id="IPR009056">
    <property type="entry name" value="Cyt_c-like_dom"/>
</dbReference>
<dbReference type="InterPro" id="IPR036909">
    <property type="entry name" value="Cyt_c-like_dom_sf"/>
</dbReference>
<dbReference type="InterPro" id="IPR002327">
    <property type="entry name" value="Cyt_c_1A/1B"/>
</dbReference>
<dbReference type="PANTHER" id="PTHR11961">
    <property type="entry name" value="CYTOCHROME C"/>
    <property type="match status" value="1"/>
</dbReference>
<dbReference type="Pfam" id="PF00034">
    <property type="entry name" value="Cytochrom_C"/>
    <property type="match status" value="1"/>
</dbReference>
<dbReference type="PRINTS" id="PR00604">
    <property type="entry name" value="CYTCHRMECIAB"/>
</dbReference>
<dbReference type="SUPFAM" id="SSF46626">
    <property type="entry name" value="Cytochrome c"/>
    <property type="match status" value="1"/>
</dbReference>
<dbReference type="PROSITE" id="PS51007">
    <property type="entry name" value="CYTC"/>
    <property type="match status" value="1"/>
</dbReference>
<accession>P25400</accession>
<reference key="1">
    <citation type="journal article" date="1991" name="Curr. Genet.">
        <title>Contrasting mutation rates in mitochondrial and nuclear genes of yeasts versus mammals.</title>
        <authorList>
            <person name="Clark-Walker G.D."/>
        </authorList>
    </citation>
    <scope>NUCLEOTIDE SEQUENCE [GENOMIC DNA]</scope>
    <source>
        <strain>ATCC 2001 / BCRC 20586 / JCM 3761 / NBRC 0622 / NRRL Y-65 / CBS 138</strain>
    </source>
</reference>
<reference key="2">
    <citation type="journal article" date="2004" name="Nature">
        <title>Genome evolution in yeasts.</title>
        <authorList>
            <person name="Dujon B."/>
            <person name="Sherman D."/>
            <person name="Fischer G."/>
            <person name="Durrens P."/>
            <person name="Casaregola S."/>
            <person name="Lafontaine I."/>
            <person name="de Montigny J."/>
            <person name="Marck C."/>
            <person name="Neuveglise C."/>
            <person name="Talla E."/>
            <person name="Goffard N."/>
            <person name="Frangeul L."/>
            <person name="Aigle M."/>
            <person name="Anthouard V."/>
            <person name="Babour A."/>
            <person name="Barbe V."/>
            <person name="Barnay S."/>
            <person name="Blanchin S."/>
            <person name="Beckerich J.-M."/>
            <person name="Beyne E."/>
            <person name="Bleykasten C."/>
            <person name="Boisrame A."/>
            <person name="Boyer J."/>
            <person name="Cattolico L."/>
            <person name="Confanioleri F."/>
            <person name="de Daruvar A."/>
            <person name="Despons L."/>
            <person name="Fabre E."/>
            <person name="Fairhead C."/>
            <person name="Ferry-Dumazet H."/>
            <person name="Groppi A."/>
            <person name="Hantraye F."/>
            <person name="Hennequin C."/>
            <person name="Jauniaux N."/>
            <person name="Joyet P."/>
            <person name="Kachouri R."/>
            <person name="Kerrest A."/>
            <person name="Koszul R."/>
            <person name="Lemaire M."/>
            <person name="Lesur I."/>
            <person name="Ma L."/>
            <person name="Muller H."/>
            <person name="Nicaud J.-M."/>
            <person name="Nikolski M."/>
            <person name="Oztas S."/>
            <person name="Ozier-Kalogeropoulos O."/>
            <person name="Pellenz S."/>
            <person name="Potier S."/>
            <person name="Richard G.-F."/>
            <person name="Straub M.-L."/>
            <person name="Suleau A."/>
            <person name="Swennen D."/>
            <person name="Tekaia F."/>
            <person name="Wesolowski-Louvel M."/>
            <person name="Westhof E."/>
            <person name="Wirth B."/>
            <person name="Zeniou-Meyer M."/>
            <person name="Zivanovic Y."/>
            <person name="Bolotin-Fukuhara M."/>
            <person name="Thierry A."/>
            <person name="Bouchier C."/>
            <person name="Caudron B."/>
            <person name="Scarpelli C."/>
            <person name="Gaillardin C."/>
            <person name="Weissenbach J."/>
            <person name="Wincker P."/>
            <person name="Souciet J.-L."/>
        </authorList>
    </citation>
    <scope>NUCLEOTIDE SEQUENCE [LARGE SCALE GENOMIC DNA]</scope>
    <source>
        <strain>ATCC 2001 / BCRC 20586 / JCM 3761 / NBRC 0622 / NRRL Y-65 / CBS 138</strain>
    </source>
</reference>
<proteinExistence type="inferred from homology"/>
<keyword id="KW-0249">Electron transport</keyword>
<keyword id="KW-0349">Heme</keyword>
<keyword id="KW-0408">Iron</keyword>
<keyword id="KW-0479">Metal-binding</keyword>
<keyword id="KW-0488">Methylation</keyword>
<keyword id="KW-0496">Mitochondrion</keyword>
<keyword id="KW-1185">Reference proteome</keyword>
<keyword id="KW-0679">Respiratory chain</keyword>
<keyword id="KW-0813">Transport</keyword>
<feature type="chain" id="PRO_0000108319" description="Cytochrome c">
    <location>
        <begin position="1"/>
        <end position="104"/>
    </location>
</feature>
<feature type="binding site" description="covalent" evidence="2">
    <location>
        <position position="14"/>
    </location>
    <ligand>
        <name>heme c</name>
        <dbReference type="ChEBI" id="CHEBI:61717"/>
    </ligand>
</feature>
<feature type="binding site" description="covalent" evidence="2">
    <location>
        <position position="17"/>
    </location>
    <ligand>
        <name>heme c</name>
        <dbReference type="ChEBI" id="CHEBI:61717"/>
    </ligand>
</feature>
<feature type="binding site" description="axial binding residue" evidence="2">
    <location>
        <position position="18"/>
    </location>
    <ligand>
        <name>heme c</name>
        <dbReference type="ChEBI" id="CHEBI:61717"/>
    </ligand>
    <ligandPart>
        <name>Fe</name>
        <dbReference type="ChEBI" id="CHEBI:18248"/>
    </ligandPart>
</feature>
<feature type="binding site" description="axial binding residue" evidence="2">
    <location>
        <position position="80"/>
    </location>
    <ligand>
        <name>heme c</name>
        <dbReference type="ChEBI" id="CHEBI:61717"/>
    </ligand>
    <ligandPart>
        <name>Fe</name>
        <dbReference type="ChEBI" id="CHEBI:18248"/>
    </ligandPart>
</feature>
<feature type="modified residue" description="N6,N6,N6-trimethyllysine" evidence="1">
    <location>
        <position position="72"/>
    </location>
</feature>
<sequence>MSEKKGATLFKTRCLQCHTVEKGGPNKVGPNLHGIFGRKSGQAAGYSYTDANIKKNVTWDEDNMSDYLTNPKKYIPGTKMAFGGLKKEKDRKDLIAYLKKATSD</sequence>
<protein>
    <recommendedName>
        <fullName>Cytochrome c</fullName>
    </recommendedName>
</protein>
<evidence type="ECO:0000250" key="1"/>
<evidence type="ECO:0000255" key="2">
    <source>
        <dbReference type="PROSITE-ProRule" id="PRU00433"/>
    </source>
</evidence>
<evidence type="ECO:0000305" key="3"/>
<comment type="function">
    <text>Electron carrier protein. The oxidized form of the cytochrome c heme group can accept an electron from the heme group of the cytochrome c1 subunit of cytochrome reductase. Cytochrome c then transfers this electron to the cytochrome oxidase complex, the final protein carrier in the mitochondrial electron-transport chain.</text>
</comment>
<comment type="subcellular location">
    <subcellularLocation>
        <location>Mitochondrion intermembrane space</location>
    </subcellularLocation>
    <text>Loosely associated with the inner membrane.</text>
</comment>
<comment type="PTM">
    <text>Binds 1 heme c group covalently per subunit.</text>
</comment>
<comment type="similarity">
    <text evidence="3">Belongs to the cytochrome c family.</text>
</comment>
<comment type="online information" name="Protein Spotlight">
    <link uri="https://www.proteinspotlight.org/back_issues/076"/>
    <text>Life shuttle - Issue 76 of November 2006</text>
</comment>
<gene>
    <name type="primary">CYC1</name>
    <name type="ordered locus">CAGL0I01408g</name>
</gene>
<organism>
    <name type="scientific">Candida glabrata (strain ATCC 2001 / BCRC 20586 / JCM 3761 / NBRC 0622 / NRRL Y-65 / CBS 138)</name>
    <name type="common">Yeast</name>
    <name type="synonym">Nakaseomyces glabratus</name>
    <dbReference type="NCBI Taxonomy" id="284593"/>
    <lineage>
        <taxon>Eukaryota</taxon>
        <taxon>Fungi</taxon>
        <taxon>Dikarya</taxon>
        <taxon>Ascomycota</taxon>
        <taxon>Saccharomycotina</taxon>
        <taxon>Saccharomycetes</taxon>
        <taxon>Saccharomycetales</taxon>
        <taxon>Saccharomycetaceae</taxon>
        <taxon>Nakaseomyces</taxon>
    </lineage>
</organism>